<dbReference type="EC" id="3.4.21.92" evidence="1"/>
<dbReference type="EMBL" id="CP001150">
    <property type="protein sequence ID" value="ACM01396.1"/>
    <property type="molecule type" value="Genomic_DNA"/>
</dbReference>
<dbReference type="RefSeq" id="WP_002720342.1">
    <property type="nucleotide sequence ID" value="NC_011963.1"/>
</dbReference>
<dbReference type="SMR" id="B9KJU9"/>
<dbReference type="MEROPS" id="S14.001"/>
<dbReference type="GeneID" id="67446946"/>
<dbReference type="KEGG" id="rsk:RSKD131_1536"/>
<dbReference type="HOGENOM" id="CLU_058707_3_2_5"/>
<dbReference type="GO" id="GO:0005737">
    <property type="term" value="C:cytoplasm"/>
    <property type="evidence" value="ECO:0007669"/>
    <property type="project" value="UniProtKB-SubCell"/>
</dbReference>
<dbReference type="GO" id="GO:0009368">
    <property type="term" value="C:endopeptidase Clp complex"/>
    <property type="evidence" value="ECO:0007669"/>
    <property type="project" value="TreeGrafter"/>
</dbReference>
<dbReference type="GO" id="GO:0004176">
    <property type="term" value="F:ATP-dependent peptidase activity"/>
    <property type="evidence" value="ECO:0007669"/>
    <property type="project" value="InterPro"/>
</dbReference>
<dbReference type="GO" id="GO:0051117">
    <property type="term" value="F:ATPase binding"/>
    <property type="evidence" value="ECO:0007669"/>
    <property type="project" value="TreeGrafter"/>
</dbReference>
<dbReference type="GO" id="GO:0004252">
    <property type="term" value="F:serine-type endopeptidase activity"/>
    <property type="evidence" value="ECO:0007669"/>
    <property type="project" value="UniProtKB-UniRule"/>
</dbReference>
<dbReference type="GO" id="GO:0006515">
    <property type="term" value="P:protein quality control for misfolded or incompletely synthesized proteins"/>
    <property type="evidence" value="ECO:0007669"/>
    <property type="project" value="TreeGrafter"/>
</dbReference>
<dbReference type="CDD" id="cd07017">
    <property type="entry name" value="S14_ClpP_2"/>
    <property type="match status" value="1"/>
</dbReference>
<dbReference type="FunFam" id="3.90.226.10:FF:000001">
    <property type="entry name" value="ATP-dependent Clp protease proteolytic subunit"/>
    <property type="match status" value="1"/>
</dbReference>
<dbReference type="Gene3D" id="3.90.226.10">
    <property type="entry name" value="2-enoyl-CoA Hydratase, Chain A, domain 1"/>
    <property type="match status" value="1"/>
</dbReference>
<dbReference type="HAMAP" id="MF_00444">
    <property type="entry name" value="ClpP"/>
    <property type="match status" value="1"/>
</dbReference>
<dbReference type="InterPro" id="IPR001907">
    <property type="entry name" value="ClpP"/>
</dbReference>
<dbReference type="InterPro" id="IPR029045">
    <property type="entry name" value="ClpP/crotonase-like_dom_sf"/>
</dbReference>
<dbReference type="InterPro" id="IPR023562">
    <property type="entry name" value="ClpP/TepA"/>
</dbReference>
<dbReference type="InterPro" id="IPR033135">
    <property type="entry name" value="ClpP_His_AS"/>
</dbReference>
<dbReference type="InterPro" id="IPR018215">
    <property type="entry name" value="ClpP_Ser_AS"/>
</dbReference>
<dbReference type="NCBIfam" id="NF001368">
    <property type="entry name" value="PRK00277.1"/>
    <property type="match status" value="1"/>
</dbReference>
<dbReference type="NCBIfam" id="NF009205">
    <property type="entry name" value="PRK12553.1"/>
    <property type="match status" value="1"/>
</dbReference>
<dbReference type="PANTHER" id="PTHR10381">
    <property type="entry name" value="ATP-DEPENDENT CLP PROTEASE PROTEOLYTIC SUBUNIT"/>
    <property type="match status" value="1"/>
</dbReference>
<dbReference type="PANTHER" id="PTHR10381:SF70">
    <property type="entry name" value="ATP-DEPENDENT CLP PROTEASE PROTEOLYTIC SUBUNIT"/>
    <property type="match status" value="1"/>
</dbReference>
<dbReference type="Pfam" id="PF00574">
    <property type="entry name" value="CLP_protease"/>
    <property type="match status" value="1"/>
</dbReference>
<dbReference type="PRINTS" id="PR00127">
    <property type="entry name" value="CLPPROTEASEP"/>
</dbReference>
<dbReference type="SUPFAM" id="SSF52096">
    <property type="entry name" value="ClpP/crotonase"/>
    <property type="match status" value="1"/>
</dbReference>
<dbReference type="PROSITE" id="PS00382">
    <property type="entry name" value="CLP_PROTEASE_HIS"/>
    <property type="match status" value="1"/>
</dbReference>
<dbReference type="PROSITE" id="PS00381">
    <property type="entry name" value="CLP_PROTEASE_SER"/>
    <property type="match status" value="1"/>
</dbReference>
<feature type="chain" id="PRO_1000135162" description="ATP-dependent Clp protease proteolytic subunit">
    <location>
        <begin position="1"/>
        <end position="210"/>
    </location>
</feature>
<feature type="active site" description="Nucleophile" evidence="1">
    <location>
        <position position="107"/>
    </location>
</feature>
<feature type="active site" evidence="1">
    <location>
        <position position="132"/>
    </location>
</feature>
<keyword id="KW-0963">Cytoplasm</keyword>
<keyword id="KW-0378">Hydrolase</keyword>
<keyword id="KW-0645">Protease</keyword>
<keyword id="KW-0720">Serine protease</keyword>
<proteinExistence type="inferred from homology"/>
<organism>
    <name type="scientific">Cereibacter sphaeroides (strain KD131 / KCTC 12085)</name>
    <name type="common">Rhodobacter sphaeroides</name>
    <dbReference type="NCBI Taxonomy" id="557760"/>
    <lineage>
        <taxon>Bacteria</taxon>
        <taxon>Pseudomonadati</taxon>
        <taxon>Pseudomonadota</taxon>
        <taxon>Alphaproteobacteria</taxon>
        <taxon>Rhodobacterales</taxon>
        <taxon>Paracoccaceae</taxon>
        <taxon>Cereibacter</taxon>
    </lineage>
</organism>
<accession>B9KJU9</accession>
<name>CLPP_CERSK</name>
<evidence type="ECO:0000255" key="1">
    <source>
        <dbReference type="HAMAP-Rule" id="MF_00444"/>
    </source>
</evidence>
<comment type="function">
    <text evidence="1">Cleaves peptides in various proteins in a process that requires ATP hydrolysis. Has a chymotrypsin-like activity. Plays a major role in the degradation of misfolded proteins.</text>
</comment>
<comment type="catalytic activity">
    <reaction evidence="1">
        <text>Hydrolysis of proteins to small peptides in the presence of ATP and magnesium. alpha-casein is the usual test substrate. In the absence of ATP, only oligopeptides shorter than five residues are hydrolyzed (such as succinyl-Leu-Tyr-|-NHMec, and Leu-Tyr-Leu-|-Tyr-Trp, in which cleavage of the -Tyr-|-Leu- and -Tyr-|-Trp bonds also occurs).</text>
        <dbReference type="EC" id="3.4.21.92"/>
    </reaction>
</comment>
<comment type="subunit">
    <text evidence="1">Fourteen ClpP subunits assemble into 2 heptameric rings which stack back to back to give a disk-like structure with a central cavity, resembling the structure of eukaryotic proteasomes.</text>
</comment>
<comment type="subcellular location">
    <subcellularLocation>
        <location evidence="1">Cytoplasm</location>
    </subcellularLocation>
</comment>
<comment type="similarity">
    <text evidence="1">Belongs to the peptidase S14 family.</text>
</comment>
<protein>
    <recommendedName>
        <fullName evidence="1">ATP-dependent Clp protease proteolytic subunit</fullName>
        <ecNumber evidence="1">3.4.21.92</ecNumber>
    </recommendedName>
    <alternativeName>
        <fullName evidence="1">Endopeptidase Clp</fullName>
    </alternativeName>
</protein>
<reference key="1">
    <citation type="journal article" date="2009" name="J. Bacteriol.">
        <title>Complete genome sequence of Rhodobacter sphaeroides KD131.</title>
        <authorList>
            <person name="Lim S.-K."/>
            <person name="Kim S.J."/>
            <person name="Cha S.H."/>
            <person name="Oh Y.-K."/>
            <person name="Rhee H.-J."/>
            <person name="Kim M.-S."/>
            <person name="Lee J.K."/>
        </authorList>
    </citation>
    <scope>NUCLEOTIDE SEQUENCE [LARGE SCALE GENOMIC DNA]</scope>
    <source>
        <strain>KD131 / KCTC 12085</strain>
    </source>
</reference>
<sequence length="210" mass="23474">MKDPIDLYMNTLVPMVVEQTSRGERAYDIYSRMLKERIIFLSGPVHDGMSSLICAQLLFLEAENPSKEIAMYINSPGGVVTSGLSIYDTMQYIRPKVSTLVIGQAASMGSLLLTAGEKGMRFSLPNSRVMVHQPSGGYQGQATDIMIHARETEKLKRRLNEIYVRHTGQDLETVEAALERDNFMSAEDAKAWGLIDEILESRNRPDDTAK</sequence>
<gene>
    <name evidence="1" type="primary">clpP</name>
    <name type="ordered locus">RSKD131_1536</name>
</gene>